<name>ALBG_BACSU</name>
<feature type="chain" id="PRO_0000064548" description="Antilisterial bacteriocin subtilosin biosynthesis protein AlbG">
    <location>
        <begin position="1"/>
        <end position="233"/>
    </location>
</feature>
<feature type="transmembrane region" description="Helical" evidence="1">
    <location>
        <begin position="7"/>
        <end position="27"/>
    </location>
</feature>
<feature type="transmembrane region" description="Helical" evidence="1">
    <location>
        <begin position="46"/>
        <end position="66"/>
    </location>
</feature>
<feature type="transmembrane region" description="Helical" evidence="1">
    <location>
        <begin position="116"/>
        <end position="136"/>
    </location>
</feature>
<feature type="transmembrane region" description="Helical" evidence="1">
    <location>
        <begin position="145"/>
        <end position="165"/>
    </location>
</feature>
<feature type="transmembrane region" description="Helical" evidence="1">
    <location>
        <begin position="176"/>
        <end position="198"/>
    </location>
</feature>
<feature type="transmembrane region" description="Helical" evidence="1">
    <location>
        <begin position="203"/>
        <end position="220"/>
    </location>
</feature>
<organism>
    <name type="scientific">Bacillus subtilis (strain 168)</name>
    <dbReference type="NCBI Taxonomy" id="224308"/>
    <lineage>
        <taxon>Bacteria</taxon>
        <taxon>Bacillati</taxon>
        <taxon>Bacillota</taxon>
        <taxon>Bacilli</taxon>
        <taxon>Bacillales</taxon>
        <taxon>Bacillaceae</taxon>
        <taxon>Bacillus</taxon>
    </lineage>
</organism>
<sequence>MKQSTVFTLLLLLIGMAAYSFGWVQAVAEAAAQYVQMINNDAVRLGLLACTAALLMLPAFLYLHYVTQSVKNMTAAFQKLTQSHQSCCDFQQHNLCSRYAEDVKSLRDSYKNVRQTYVMAAVLCQVIIFGCMFEIVKAVPFRLHTPPAFSMGLAMLLILYLLFCMRTYLRQLFRHGSLFRKVFAGALAAAGIWWMLSFSISELLFLIILAAIQQIGSFIYKRFSYHSTASLDL</sequence>
<gene>
    <name type="primary">albG</name>
    <name type="synonym">ywhM</name>
    <name type="ordered locus">BSU37430</name>
</gene>
<comment type="function">
    <text evidence="2 3">Involved in the production of the bacteriocin subtilosin.</text>
</comment>
<comment type="subcellular location">
    <subcellularLocation>
        <location evidence="5">Cell membrane</location>
        <topology evidence="5">Multi-pass membrane protein</topology>
    </subcellularLocation>
</comment>
<comment type="induction">
    <text evidence="4">Transcription is highly induced by oxygen limitation and is under dual and independent control of Spo0A-AbrB and ResDE.</text>
</comment>
<reference key="1">
    <citation type="journal article" date="1997" name="Microbiology">
        <title>The Bacillus subtilis genome from gerBC (311 degrees) to licR (334 degrees).</title>
        <authorList>
            <person name="Presecan E."/>
            <person name="Moszer I."/>
            <person name="Boursier L."/>
            <person name="Cruz Ramos H."/>
            <person name="De La Fuente V."/>
            <person name="Hullo M.-F."/>
            <person name="Lelong C."/>
            <person name="Schleich S."/>
            <person name="Sekowska A."/>
            <person name="Song B.H."/>
            <person name="Villani G."/>
            <person name="Kunst F."/>
            <person name="Danchin A."/>
            <person name="Glaser P."/>
        </authorList>
    </citation>
    <scope>NUCLEOTIDE SEQUENCE [GENOMIC DNA]</scope>
    <source>
        <strain>168</strain>
    </source>
</reference>
<reference key="2">
    <citation type="journal article" date="1997" name="Nature">
        <title>The complete genome sequence of the Gram-positive bacterium Bacillus subtilis.</title>
        <authorList>
            <person name="Kunst F."/>
            <person name="Ogasawara N."/>
            <person name="Moszer I."/>
            <person name="Albertini A.M."/>
            <person name="Alloni G."/>
            <person name="Azevedo V."/>
            <person name="Bertero M.G."/>
            <person name="Bessieres P."/>
            <person name="Bolotin A."/>
            <person name="Borchert S."/>
            <person name="Borriss R."/>
            <person name="Boursier L."/>
            <person name="Brans A."/>
            <person name="Braun M."/>
            <person name="Brignell S.C."/>
            <person name="Bron S."/>
            <person name="Brouillet S."/>
            <person name="Bruschi C.V."/>
            <person name="Caldwell B."/>
            <person name="Capuano V."/>
            <person name="Carter N.M."/>
            <person name="Choi S.-K."/>
            <person name="Codani J.-J."/>
            <person name="Connerton I.F."/>
            <person name="Cummings N.J."/>
            <person name="Daniel R.A."/>
            <person name="Denizot F."/>
            <person name="Devine K.M."/>
            <person name="Duesterhoeft A."/>
            <person name="Ehrlich S.D."/>
            <person name="Emmerson P.T."/>
            <person name="Entian K.-D."/>
            <person name="Errington J."/>
            <person name="Fabret C."/>
            <person name="Ferrari E."/>
            <person name="Foulger D."/>
            <person name="Fritz C."/>
            <person name="Fujita M."/>
            <person name="Fujita Y."/>
            <person name="Fuma S."/>
            <person name="Galizzi A."/>
            <person name="Galleron N."/>
            <person name="Ghim S.-Y."/>
            <person name="Glaser P."/>
            <person name="Goffeau A."/>
            <person name="Golightly E.J."/>
            <person name="Grandi G."/>
            <person name="Guiseppi G."/>
            <person name="Guy B.J."/>
            <person name="Haga K."/>
            <person name="Haiech J."/>
            <person name="Harwood C.R."/>
            <person name="Henaut A."/>
            <person name="Hilbert H."/>
            <person name="Holsappel S."/>
            <person name="Hosono S."/>
            <person name="Hullo M.-F."/>
            <person name="Itaya M."/>
            <person name="Jones L.-M."/>
            <person name="Joris B."/>
            <person name="Karamata D."/>
            <person name="Kasahara Y."/>
            <person name="Klaerr-Blanchard M."/>
            <person name="Klein C."/>
            <person name="Kobayashi Y."/>
            <person name="Koetter P."/>
            <person name="Koningstein G."/>
            <person name="Krogh S."/>
            <person name="Kumano M."/>
            <person name="Kurita K."/>
            <person name="Lapidus A."/>
            <person name="Lardinois S."/>
            <person name="Lauber J."/>
            <person name="Lazarevic V."/>
            <person name="Lee S.-M."/>
            <person name="Levine A."/>
            <person name="Liu H."/>
            <person name="Masuda S."/>
            <person name="Mauel C."/>
            <person name="Medigue C."/>
            <person name="Medina N."/>
            <person name="Mellado R.P."/>
            <person name="Mizuno M."/>
            <person name="Moestl D."/>
            <person name="Nakai S."/>
            <person name="Noback M."/>
            <person name="Noone D."/>
            <person name="O'Reilly M."/>
            <person name="Ogawa K."/>
            <person name="Ogiwara A."/>
            <person name="Oudega B."/>
            <person name="Park S.-H."/>
            <person name="Parro V."/>
            <person name="Pohl T.M."/>
            <person name="Portetelle D."/>
            <person name="Porwollik S."/>
            <person name="Prescott A.M."/>
            <person name="Presecan E."/>
            <person name="Pujic P."/>
            <person name="Purnelle B."/>
            <person name="Rapoport G."/>
            <person name="Rey M."/>
            <person name="Reynolds S."/>
            <person name="Rieger M."/>
            <person name="Rivolta C."/>
            <person name="Rocha E."/>
            <person name="Roche B."/>
            <person name="Rose M."/>
            <person name="Sadaie Y."/>
            <person name="Sato T."/>
            <person name="Scanlan E."/>
            <person name="Schleich S."/>
            <person name="Schroeter R."/>
            <person name="Scoffone F."/>
            <person name="Sekiguchi J."/>
            <person name="Sekowska A."/>
            <person name="Seror S.J."/>
            <person name="Serror P."/>
            <person name="Shin B.-S."/>
            <person name="Soldo B."/>
            <person name="Sorokin A."/>
            <person name="Tacconi E."/>
            <person name="Takagi T."/>
            <person name="Takahashi H."/>
            <person name="Takemaru K."/>
            <person name="Takeuchi M."/>
            <person name="Tamakoshi A."/>
            <person name="Tanaka T."/>
            <person name="Terpstra P."/>
            <person name="Tognoni A."/>
            <person name="Tosato V."/>
            <person name="Uchiyama S."/>
            <person name="Vandenbol M."/>
            <person name="Vannier F."/>
            <person name="Vassarotti A."/>
            <person name="Viari A."/>
            <person name="Wambutt R."/>
            <person name="Wedler E."/>
            <person name="Wedler H."/>
            <person name="Weitzenegger T."/>
            <person name="Winters P."/>
            <person name="Wipat A."/>
            <person name="Yamamoto H."/>
            <person name="Yamane K."/>
            <person name="Yasumoto K."/>
            <person name="Yata K."/>
            <person name="Yoshida K."/>
            <person name="Yoshikawa H.-F."/>
            <person name="Zumstein E."/>
            <person name="Yoshikawa H."/>
            <person name="Danchin A."/>
        </authorList>
    </citation>
    <scope>NUCLEOTIDE SEQUENCE [LARGE SCALE GENOMIC DNA]</scope>
    <source>
        <strain>168</strain>
    </source>
</reference>
<reference key="3">
    <citation type="journal article" date="1999" name="J. Bacteriol.">
        <title>Genes of the sbo-alb locus of Bacillus subtilis are required for production of the antilisterial bacteriocin subtilosin.</title>
        <authorList>
            <person name="Zheng G."/>
            <person name="Yan L.Z."/>
            <person name="Vederas J.C."/>
            <person name="Zuber P."/>
        </authorList>
    </citation>
    <scope>FUNCTION</scope>
    <source>
        <strain>168 / JH642</strain>
        <strain>22a</strain>
    </source>
</reference>
<reference key="4">
    <citation type="journal article" date="2000" name="J. Bacteriol.">
        <title>Mutational analysis of the sbo-alb locus of Bacillus subtilis: identification of genes required for subtilosin production and immunity.</title>
        <authorList>
            <person name="Zheng G."/>
            <person name="Hehn R."/>
            <person name="Zuber P."/>
        </authorList>
    </citation>
    <scope>FUNCTION</scope>
    <source>
        <strain>168 / JH642</strain>
    </source>
</reference>
<reference key="5">
    <citation type="journal article" date="2000" name="J. Bacteriol.">
        <title>Dual control of sbo-alb operon expression by the Spo0 and ResDE systems of signal transduction under anaerobic conditions in Bacillus subtilis.</title>
        <authorList>
            <person name="Nakano M.M."/>
            <person name="Zheng G."/>
            <person name="Zuber P."/>
        </authorList>
    </citation>
    <scope>TRANSCRIPTIONAL REGULATION</scope>
    <source>
        <strain>168 / JH642</strain>
    </source>
</reference>
<dbReference type="EMBL" id="Z80360">
    <property type="protein sequence ID" value="CAB02503.1"/>
    <property type="molecule type" value="Genomic_DNA"/>
</dbReference>
<dbReference type="EMBL" id="AL009126">
    <property type="protein sequence ID" value="CAB15770.1"/>
    <property type="molecule type" value="Genomic_DNA"/>
</dbReference>
<dbReference type="PIR" id="D70058">
    <property type="entry name" value="D70058"/>
</dbReference>
<dbReference type="RefSeq" id="NP_391623.1">
    <property type="nucleotide sequence ID" value="NC_000964.3"/>
</dbReference>
<dbReference type="RefSeq" id="WP_003243391.1">
    <property type="nucleotide sequence ID" value="NZ_OZ025638.1"/>
</dbReference>
<dbReference type="SMR" id="P71005"/>
<dbReference type="FunCoup" id="P71005">
    <property type="interactions" value="8"/>
</dbReference>
<dbReference type="STRING" id="224308.BSU37430"/>
<dbReference type="PaxDb" id="224308-BSU37430"/>
<dbReference type="EnsemblBacteria" id="CAB15770">
    <property type="protein sequence ID" value="CAB15770"/>
    <property type="gene ID" value="BSU_37430"/>
</dbReference>
<dbReference type="GeneID" id="937060"/>
<dbReference type="KEGG" id="bsu:BSU37430"/>
<dbReference type="PATRIC" id="fig|224308.179.peg.4053"/>
<dbReference type="InParanoid" id="P71005"/>
<dbReference type="OrthoDB" id="2932400at2"/>
<dbReference type="BioCyc" id="BSUB:BSU37430-MONOMER"/>
<dbReference type="Proteomes" id="UP000001570">
    <property type="component" value="Chromosome"/>
</dbReference>
<dbReference type="GO" id="GO:0005886">
    <property type="term" value="C:plasma membrane"/>
    <property type="evidence" value="ECO:0007669"/>
    <property type="project" value="UniProtKB-SubCell"/>
</dbReference>
<dbReference type="GO" id="GO:0030152">
    <property type="term" value="P:bacteriocin biosynthetic process"/>
    <property type="evidence" value="ECO:0007669"/>
    <property type="project" value="UniProtKB-KW"/>
</dbReference>
<evidence type="ECO:0000255" key="1"/>
<evidence type="ECO:0000269" key="2">
    <source>
    </source>
</evidence>
<evidence type="ECO:0000269" key="3">
    <source>
    </source>
</evidence>
<evidence type="ECO:0000269" key="4">
    <source>
    </source>
</evidence>
<evidence type="ECO:0000305" key="5"/>
<accession>P71005</accession>
<keyword id="KW-0045">Antibiotic biosynthesis</keyword>
<keyword id="KW-0871">Bacteriocin biosynthesis</keyword>
<keyword id="KW-1003">Cell membrane</keyword>
<keyword id="KW-0472">Membrane</keyword>
<keyword id="KW-1185">Reference proteome</keyword>
<keyword id="KW-0812">Transmembrane</keyword>
<keyword id="KW-1133">Transmembrane helix</keyword>
<proteinExistence type="evidence at transcript level"/>
<protein>
    <recommendedName>
        <fullName>Antilisterial bacteriocin subtilosin biosynthesis protein AlbG</fullName>
    </recommendedName>
</protein>